<proteinExistence type="inferred from homology"/>
<protein>
    <recommendedName>
        <fullName evidence="1">Succinate dehydrogenase assembly factor 3, mitochondrial</fullName>
        <shortName evidence="1">SDH assembly factor 3</shortName>
        <shortName evidence="1">SDHAF3</shortName>
    </recommendedName>
</protein>
<evidence type="ECO:0000250" key="1">
    <source>
        <dbReference type="UniProtKB" id="Q04401"/>
    </source>
</evidence>
<evidence type="ECO:0000250" key="2">
    <source>
        <dbReference type="UniProtKB" id="Q8SZ16"/>
    </source>
</evidence>
<evidence type="ECO:0000255" key="3"/>
<evidence type="ECO:0000305" key="4"/>
<comment type="function">
    <text evidence="1 2">Plays an essential role in the assembly of succinate dehydrogenase (SDH), an enzyme complex (also referred to as respiratory complex II) that is a component of both the tricarboxylic acid (TCA) cycle and the mitochondrial electron transport chain, and which couples the oxidation of succinate to fumarate with the reduction of ubiquinone (coenzyme Q) to ubiquinol. Promotes maturation of the iron-sulfur protein subunit of the SDH catalytic dimer, protecting it from the deleterious effects of oxidants. May act together with SDHAF1.</text>
</comment>
<comment type="subunit">
    <text evidence="1">Interacts with the iron-sulfur protein subunit within the SDH catalytic dimer.</text>
</comment>
<comment type="subcellular location">
    <subcellularLocation>
        <location evidence="1">Mitochondrion matrix</location>
    </subcellularLocation>
</comment>
<comment type="similarity">
    <text evidence="4">Belongs to the complex I LYR family. SDHAF3 subfamily.</text>
</comment>
<dbReference type="EMBL" id="AACD01000032">
    <property type="protein sequence ID" value="EAA64935.1"/>
    <property type="molecule type" value="Genomic_DNA"/>
</dbReference>
<dbReference type="EMBL" id="BN001307">
    <property type="protein sequence ID" value="CBF86184.1"/>
    <property type="molecule type" value="Genomic_DNA"/>
</dbReference>
<dbReference type="RefSeq" id="XP_659707.1">
    <property type="nucleotide sequence ID" value="XM_654615.1"/>
</dbReference>
<dbReference type="SMR" id="Q5BBH7"/>
<dbReference type="FunCoup" id="Q5BBH7">
    <property type="interactions" value="248"/>
</dbReference>
<dbReference type="STRING" id="227321.Q5BBH7"/>
<dbReference type="EnsemblFungi" id="CBF86184">
    <property type="protein sequence ID" value="CBF86184"/>
    <property type="gene ID" value="ANIA_02103"/>
</dbReference>
<dbReference type="KEGG" id="ani:ANIA_02103"/>
<dbReference type="VEuPathDB" id="FungiDB:AN2103"/>
<dbReference type="eggNOG" id="KOG4100">
    <property type="taxonomic scope" value="Eukaryota"/>
</dbReference>
<dbReference type="HOGENOM" id="CLU_102310_1_0_1"/>
<dbReference type="InParanoid" id="Q5BBH7"/>
<dbReference type="OMA" id="WQQTNEN"/>
<dbReference type="OrthoDB" id="278329at2759"/>
<dbReference type="Proteomes" id="UP000000560">
    <property type="component" value="Chromosome VII"/>
</dbReference>
<dbReference type="GO" id="GO:0005758">
    <property type="term" value="C:mitochondrial intermembrane space"/>
    <property type="evidence" value="ECO:0000318"/>
    <property type="project" value="GO_Central"/>
</dbReference>
<dbReference type="GO" id="GO:0005759">
    <property type="term" value="C:mitochondrial matrix"/>
    <property type="evidence" value="ECO:0007669"/>
    <property type="project" value="UniProtKB-SubCell"/>
</dbReference>
<dbReference type="GO" id="GO:0006094">
    <property type="term" value="P:gluconeogenesis"/>
    <property type="evidence" value="ECO:0007669"/>
    <property type="project" value="UniProtKB-KW"/>
</dbReference>
<dbReference type="GO" id="GO:0034553">
    <property type="term" value="P:mitochondrial respiratory chain complex II assembly"/>
    <property type="evidence" value="ECO:0000318"/>
    <property type="project" value="GO_Central"/>
</dbReference>
<dbReference type="GO" id="GO:0006105">
    <property type="term" value="P:succinate metabolic process"/>
    <property type="evidence" value="ECO:0000318"/>
    <property type="project" value="GO_Central"/>
</dbReference>
<dbReference type="CDD" id="cd20270">
    <property type="entry name" value="Complex1_LYR_SDHAF3_LYRM10"/>
    <property type="match status" value="1"/>
</dbReference>
<dbReference type="InterPro" id="IPR008381">
    <property type="entry name" value="SDHAF3/Sdh7"/>
</dbReference>
<dbReference type="PANTHER" id="PTHR13137">
    <property type="entry name" value="DC11 ACN9 HOMOLOG"/>
    <property type="match status" value="1"/>
</dbReference>
<dbReference type="PANTHER" id="PTHR13137:SF6">
    <property type="entry name" value="SUCCINATE DEHYDROGENASE ASSEMBLY FACTOR 3, MITOCHONDRIAL"/>
    <property type="match status" value="1"/>
</dbReference>
<dbReference type="Pfam" id="PF13233">
    <property type="entry name" value="Complex1_LYR_2"/>
    <property type="match status" value="1"/>
</dbReference>
<feature type="transit peptide" description="Mitochondrion" evidence="3">
    <location>
        <begin position="1"/>
        <end position="12"/>
    </location>
</feature>
<feature type="chain" id="PRO_0000042746" description="Succinate dehydrogenase assembly factor 3, mitochondrial">
    <location>
        <begin position="13"/>
        <end position="135"/>
    </location>
</feature>
<accession>Q5BBH7</accession>
<accession>C8VLY2</accession>
<sequence length="135" mass="15403">MRIFTRLLYAAPSNMGSAASLSEALALLPPIPLYRRILRVHRKKLDPEMRILGDSYVKSEFRAHRGTENPLHIIGFLTEWQLYAQKLEGDSWIGEKLDQGKLDKMSDQQLGQLYELMQTIQNKDGKGEGEGESEK</sequence>
<reference key="1">
    <citation type="journal article" date="2005" name="Nature">
        <title>Sequencing of Aspergillus nidulans and comparative analysis with A. fumigatus and A. oryzae.</title>
        <authorList>
            <person name="Galagan J.E."/>
            <person name="Calvo S.E."/>
            <person name="Cuomo C."/>
            <person name="Ma L.-J."/>
            <person name="Wortman J.R."/>
            <person name="Batzoglou S."/>
            <person name="Lee S.-I."/>
            <person name="Bastuerkmen M."/>
            <person name="Spevak C.C."/>
            <person name="Clutterbuck J."/>
            <person name="Kapitonov V."/>
            <person name="Jurka J."/>
            <person name="Scazzocchio C."/>
            <person name="Farman M.L."/>
            <person name="Butler J."/>
            <person name="Purcell S."/>
            <person name="Harris S."/>
            <person name="Braus G.H."/>
            <person name="Draht O."/>
            <person name="Busch S."/>
            <person name="D'Enfert C."/>
            <person name="Bouchier C."/>
            <person name="Goldman G.H."/>
            <person name="Bell-Pedersen D."/>
            <person name="Griffiths-Jones S."/>
            <person name="Doonan J.H."/>
            <person name="Yu J."/>
            <person name="Vienken K."/>
            <person name="Pain A."/>
            <person name="Freitag M."/>
            <person name="Selker E.U."/>
            <person name="Archer D.B."/>
            <person name="Penalva M.A."/>
            <person name="Oakley B.R."/>
            <person name="Momany M."/>
            <person name="Tanaka T."/>
            <person name="Kumagai T."/>
            <person name="Asai K."/>
            <person name="Machida M."/>
            <person name="Nierman W.C."/>
            <person name="Denning D.W."/>
            <person name="Caddick M.X."/>
            <person name="Hynes M."/>
            <person name="Paoletti M."/>
            <person name="Fischer R."/>
            <person name="Miller B.L."/>
            <person name="Dyer P.S."/>
            <person name="Sachs M.S."/>
            <person name="Osmani S.A."/>
            <person name="Birren B.W."/>
        </authorList>
    </citation>
    <scope>NUCLEOTIDE SEQUENCE [LARGE SCALE GENOMIC DNA]</scope>
    <source>
        <strain>FGSC A4 / ATCC 38163 / CBS 112.46 / NRRL 194 / M139</strain>
    </source>
</reference>
<reference key="2">
    <citation type="journal article" date="2009" name="Fungal Genet. Biol.">
        <title>The 2008 update of the Aspergillus nidulans genome annotation: a community effort.</title>
        <authorList>
            <person name="Wortman J.R."/>
            <person name="Gilsenan J.M."/>
            <person name="Joardar V."/>
            <person name="Deegan J."/>
            <person name="Clutterbuck J."/>
            <person name="Andersen M.R."/>
            <person name="Archer D."/>
            <person name="Bencina M."/>
            <person name="Braus G."/>
            <person name="Coutinho P."/>
            <person name="von Dohren H."/>
            <person name="Doonan J."/>
            <person name="Driessen A.J."/>
            <person name="Durek P."/>
            <person name="Espeso E."/>
            <person name="Fekete E."/>
            <person name="Flipphi M."/>
            <person name="Estrada C.G."/>
            <person name="Geysens S."/>
            <person name="Goldman G."/>
            <person name="de Groot P.W."/>
            <person name="Hansen K."/>
            <person name="Harris S.D."/>
            <person name="Heinekamp T."/>
            <person name="Helmstaedt K."/>
            <person name="Henrissat B."/>
            <person name="Hofmann G."/>
            <person name="Homan T."/>
            <person name="Horio T."/>
            <person name="Horiuchi H."/>
            <person name="James S."/>
            <person name="Jones M."/>
            <person name="Karaffa L."/>
            <person name="Karanyi Z."/>
            <person name="Kato M."/>
            <person name="Keller N."/>
            <person name="Kelly D.E."/>
            <person name="Kiel J.A."/>
            <person name="Kim J.M."/>
            <person name="van der Klei I.J."/>
            <person name="Klis F.M."/>
            <person name="Kovalchuk A."/>
            <person name="Krasevec N."/>
            <person name="Kubicek C.P."/>
            <person name="Liu B."/>
            <person name="Maccabe A."/>
            <person name="Meyer V."/>
            <person name="Mirabito P."/>
            <person name="Miskei M."/>
            <person name="Mos M."/>
            <person name="Mullins J."/>
            <person name="Nelson D.R."/>
            <person name="Nielsen J."/>
            <person name="Oakley B.R."/>
            <person name="Osmani S.A."/>
            <person name="Pakula T."/>
            <person name="Paszewski A."/>
            <person name="Paulsen I."/>
            <person name="Pilsyk S."/>
            <person name="Pocsi I."/>
            <person name="Punt P.J."/>
            <person name="Ram A.F."/>
            <person name="Ren Q."/>
            <person name="Robellet X."/>
            <person name="Robson G."/>
            <person name="Seiboth B."/>
            <person name="van Solingen P."/>
            <person name="Specht T."/>
            <person name="Sun J."/>
            <person name="Taheri-Talesh N."/>
            <person name="Takeshita N."/>
            <person name="Ussery D."/>
            <person name="vanKuyk P.A."/>
            <person name="Visser H."/>
            <person name="van de Vondervoort P.J."/>
            <person name="de Vries R.P."/>
            <person name="Walton J."/>
            <person name="Xiang X."/>
            <person name="Xiong Y."/>
            <person name="Zeng A.P."/>
            <person name="Brandt B.W."/>
            <person name="Cornell M.J."/>
            <person name="van den Hondel C.A."/>
            <person name="Visser J."/>
            <person name="Oliver S.G."/>
            <person name="Turner G."/>
        </authorList>
    </citation>
    <scope>GENOME REANNOTATION</scope>
    <source>
        <strain>FGSC A4 / ATCC 38163 / CBS 112.46 / NRRL 194 / M139</strain>
    </source>
</reference>
<name>SDHF3_EMENI</name>
<organism>
    <name type="scientific">Emericella nidulans (strain FGSC A4 / ATCC 38163 / CBS 112.46 / NRRL 194 / M139)</name>
    <name type="common">Aspergillus nidulans</name>
    <dbReference type="NCBI Taxonomy" id="227321"/>
    <lineage>
        <taxon>Eukaryota</taxon>
        <taxon>Fungi</taxon>
        <taxon>Dikarya</taxon>
        <taxon>Ascomycota</taxon>
        <taxon>Pezizomycotina</taxon>
        <taxon>Eurotiomycetes</taxon>
        <taxon>Eurotiomycetidae</taxon>
        <taxon>Eurotiales</taxon>
        <taxon>Aspergillaceae</taxon>
        <taxon>Aspergillus</taxon>
        <taxon>Aspergillus subgen. Nidulantes</taxon>
    </lineage>
</organism>
<keyword id="KW-0143">Chaperone</keyword>
<keyword id="KW-0312">Gluconeogenesis</keyword>
<keyword id="KW-0496">Mitochondrion</keyword>
<keyword id="KW-1185">Reference proteome</keyword>
<keyword id="KW-0809">Transit peptide</keyword>
<gene>
    <name type="ORF">AN2103</name>
</gene>